<organism>
    <name type="scientific">Archaeoglobus fulgidus (strain ATCC 49558 / DSM 4304 / JCM 9628 / NBRC 100126 / VC-16)</name>
    <dbReference type="NCBI Taxonomy" id="224325"/>
    <lineage>
        <taxon>Archaea</taxon>
        <taxon>Methanobacteriati</taxon>
        <taxon>Methanobacteriota</taxon>
        <taxon>Archaeoglobi</taxon>
        <taxon>Archaeoglobales</taxon>
        <taxon>Archaeoglobaceae</taxon>
        <taxon>Archaeoglobus</taxon>
    </lineage>
</organism>
<keyword id="KW-0169">Cobalamin biosynthesis</keyword>
<keyword id="KW-0489">Methyltransferase</keyword>
<keyword id="KW-1185">Reference proteome</keyword>
<keyword id="KW-0949">S-adenosyl-L-methionine</keyword>
<keyword id="KW-0808">Transferase</keyword>
<evidence type="ECO:0000255" key="1">
    <source>
        <dbReference type="HAMAP-Rule" id="MF_00786"/>
    </source>
</evidence>
<comment type="function">
    <text evidence="1">Catalyzes the methylation of C-15 in cobalt-precorrin-6B followed by the decarboxylation of C-12 to form cobalt-precorrin-7.</text>
</comment>
<comment type="catalytic activity">
    <reaction evidence="1">
        <text>Co-precorrin-6B + S-adenosyl-L-methionine = Co-precorrin-7 + S-adenosyl-L-homocysteine + CO2</text>
        <dbReference type="Rhea" id="RHEA:36067"/>
        <dbReference type="ChEBI" id="CHEBI:16526"/>
        <dbReference type="ChEBI" id="CHEBI:57856"/>
        <dbReference type="ChEBI" id="CHEBI:59789"/>
        <dbReference type="ChEBI" id="CHEBI:70791"/>
        <dbReference type="ChEBI" id="CHEBI:72780"/>
        <dbReference type="EC" id="2.1.1.196"/>
    </reaction>
</comment>
<comment type="pathway">
    <text evidence="1">Cofactor biosynthesis; adenosylcobalamin biosynthesis; cob(II)yrinate a,c-diamide from sirohydrochlorin (anaerobic route): step 8/10.</text>
</comment>
<comment type="similarity">
    <text evidence="1">Belongs to the methyltransferase superfamily. Archaeal-type CbiT family.</text>
</comment>
<accession>O29526</accession>
<proteinExistence type="inferred from homology"/>
<dbReference type="EC" id="2.1.1.196" evidence="1"/>
<dbReference type="EMBL" id="AE000782">
    <property type="protein sequence ID" value="AAB90506.1"/>
    <property type="molecule type" value="Genomic_DNA"/>
</dbReference>
<dbReference type="PIR" id="D69341">
    <property type="entry name" value="D69341"/>
</dbReference>
<dbReference type="RefSeq" id="WP_010878235.1">
    <property type="nucleotide sequence ID" value="NC_000917.1"/>
</dbReference>
<dbReference type="SMR" id="O29526"/>
<dbReference type="STRING" id="224325.AF_0732"/>
<dbReference type="PaxDb" id="224325-AF_0732"/>
<dbReference type="EnsemblBacteria" id="AAB90506">
    <property type="protein sequence ID" value="AAB90506"/>
    <property type="gene ID" value="AF_0732"/>
</dbReference>
<dbReference type="KEGG" id="afu:AF_0732"/>
<dbReference type="eggNOG" id="arCOG00977">
    <property type="taxonomic scope" value="Archaea"/>
</dbReference>
<dbReference type="HOGENOM" id="CLU_094143_1_0_2"/>
<dbReference type="OrthoDB" id="6027at2157"/>
<dbReference type="PhylomeDB" id="O29526"/>
<dbReference type="UniPathway" id="UPA00148">
    <property type="reaction ID" value="UER00229"/>
</dbReference>
<dbReference type="Proteomes" id="UP000002199">
    <property type="component" value="Chromosome"/>
</dbReference>
<dbReference type="GO" id="GO:0043776">
    <property type="term" value="F:cobalt-precorrin-6B C5-methyltransferase activity"/>
    <property type="evidence" value="ECO:0007669"/>
    <property type="project" value="RHEA"/>
</dbReference>
<dbReference type="GO" id="GO:0008757">
    <property type="term" value="F:S-adenosylmethionine-dependent methyltransferase activity"/>
    <property type="evidence" value="ECO:0007669"/>
    <property type="project" value="InterPro"/>
</dbReference>
<dbReference type="GO" id="GO:0019251">
    <property type="term" value="P:anaerobic cobalamin biosynthetic process"/>
    <property type="evidence" value="ECO:0007669"/>
    <property type="project" value="UniProtKB-UniRule"/>
</dbReference>
<dbReference type="GO" id="GO:0032259">
    <property type="term" value="P:methylation"/>
    <property type="evidence" value="ECO:0007669"/>
    <property type="project" value="UniProtKB-KW"/>
</dbReference>
<dbReference type="CDD" id="cd02440">
    <property type="entry name" value="AdoMet_MTases"/>
    <property type="match status" value="1"/>
</dbReference>
<dbReference type="Gene3D" id="3.40.50.150">
    <property type="entry name" value="Vaccinia Virus protein VP39"/>
    <property type="match status" value="1"/>
</dbReference>
<dbReference type="HAMAP" id="MF_00786">
    <property type="entry name" value="CbiT"/>
    <property type="match status" value="1"/>
</dbReference>
<dbReference type="InterPro" id="IPR023475">
    <property type="entry name" value="CbiT"/>
</dbReference>
<dbReference type="InterPro" id="IPR050714">
    <property type="entry name" value="Cobalamin_biosynth_MTase"/>
</dbReference>
<dbReference type="InterPro" id="IPR013216">
    <property type="entry name" value="Methyltransf_11"/>
</dbReference>
<dbReference type="InterPro" id="IPR029063">
    <property type="entry name" value="SAM-dependent_MTases_sf"/>
</dbReference>
<dbReference type="PANTHER" id="PTHR43182">
    <property type="entry name" value="COBALT-PRECORRIN-6B C(15)-METHYLTRANSFERASE (DECARBOXYLATING)"/>
    <property type="match status" value="1"/>
</dbReference>
<dbReference type="PANTHER" id="PTHR43182:SF1">
    <property type="entry name" value="COBALT-PRECORRIN-7 C(5)-METHYLTRANSFERASE"/>
    <property type="match status" value="1"/>
</dbReference>
<dbReference type="Pfam" id="PF08241">
    <property type="entry name" value="Methyltransf_11"/>
    <property type="match status" value="1"/>
</dbReference>
<dbReference type="SUPFAM" id="SSF53335">
    <property type="entry name" value="S-adenosyl-L-methionine-dependent methyltransferases"/>
    <property type="match status" value="1"/>
</dbReference>
<gene>
    <name evidence="1" type="primary">cbiT</name>
    <name type="ordered locus">AF_0732</name>
</gene>
<sequence>MTGKFTKEEVIGVVFSKLRPSPNDVFADIGCGSGAVTEFFAPYVRKAYAIDIEISDEARERLKRFDNVVLLEMDGKEFLKKYSPDVVFIGGTKGVEEMLEICNARRVVVNAARIEVALSAARKMREKGIFREIVLVNAAKSYELAGGLAFRSLNPVFVVFGER</sequence>
<feature type="chain" id="PRO_0000134935" description="Probable cobalt-precorrin-6B C(15)-methyltransferase (decarboxylating)">
    <location>
        <begin position="1"/>
        <end position="163"/>
    </location>
</feature>
<feature type="binding site" evidence="1">
    <location>
        <position position="6"/>
    </location>
    <ligand>
        <name>S-adenosyl-L-methionine</name>
        <dbReference type="ChEBI" id="CHEBI:59789"/>
    </ligand>
</feature>
<feature type="binding site" evidence="1">
    <location>
        <begin position="30"/>
        <end position="34"/>
    </location>
    <ligand>
        <name>S-adenosyl-L-methionine</name>
        <dbReference type="ChEBI" id="CHEBI:59789"/>
    </ligand>
</feature>
<feature type="binding site" evidence="1">
    <location>
        <position position="51"/>
    </location>
    <ligand>
        <name>S-adenosyl-L-methionine</name>
        <dbReference type="ChEBI" id="CHEBI:59789"/>
    </ligand>
</feature>
<feature type="binding site" evidence="1">
    <location>
        <position position="75"/>
    </location>
    <ligand>
        <name>S-adenosyl-L-methionine</name>
        <dbReference type="ChEBI" id="CHEBI:59789"/>
    </ligand>
</feature>
<reference key="1">
    <citation type="journal article" date="1997" name="Nature">
        <title>The complete genome sequence of the hyperthermophilic, sulphate-reducing archaeon Archaeoglobus fulgidus.</title>
        <authorList>
            <person name="Klenk H.-P."/>
            <person name="Clayton R.A."/>
            <person name="Tomb J.-F."/>
            <person name="White O."/>
            <person name="Nelson K.E."/>
            <person name="Ketchum K.A."/>
            <person name="Dodson R.J."/>
            <person name="Gwinn M.L."/>
            <person name="Hickey E.K."/>
            <person name="Peterson J.D."/>
            <person name="Richardson D.L."/>
            <person name="Kerlavage A.R."/>
            <person name="Graham D.E."/>
            <person name="Kyrpides N.C."/>
            <person name="Fleischmann R.D."/>
            <person name="Quackenbush J."/>
            <person name="Lee N.H."/>
            <person name="Sutton G.G."/>
            <person name="Gill S.R."/>
            <person name="Kirkness E.F."/>
            <person name="Dougherty B.A."/>
            <person name="McKenney K."/>
            <person name="Adams M.D."/>
            <person name="Loftus B.J."/>
            <person name="Peterson S.N."/>
            <person name="Reich C.I."/>
            <person name="McNeil L.K."/>
            <person name="Badger J.H."/>
            <person name="Glodek A."/>
            <person name="Zhou L."/>
            <person name="Overbeek R."/>
            <person name="Gocayne J.D."/>
            <person name="Weidman J.F."/>
            <person name="McDonald L.A."/>
            <person name="Utterback T.R."/>
            <person name="Cotton M.D."/>
            <person name="Spriggs T."/>
            <person name="Artiach P."/>
            <person name="Kaine B.P."/>
            <person name="Sykes S.M."/>
            <person name="Sadow P.W."/>
            <person name="D'Andrea K.P."/>
            <person name="Bowman C."/>
            <person name="Fujii C."/>
            <person name="Garland S.A."/>
            <person name="Mason T.M."/>
            <person name="Olsen G.J."/>
            <person name="Fraser C.M."/>
            <person name="Smith H.O."/>
            <person name="Woese C.R."/>
            <person name="Venter J.C."/>
        </authorList>
    </citation>
    <scope>NUCLEOTIDE SEQUENCE [LARGE SCALE GENOMIC DNA]</scope>
    <source>
        <strain>ATCC 49558 / DSM 4304 / JCM 9628 / NBRC 100126 / VC-16</strain>
    </source>
</reference>
<name>CBIT_ARCFU</name>
<protein>
    <recommendedName>
        <fullName evidence="1">Probable cobalt-precorrin-6B C(15)-methyltransferase (decarboxylating)</fullName>
        <ecNumber evidence="1">2.1.1.196</ecNumber>
    </recommendedName>
</protein>